<dbReference type="EMBL" id="AE000657">
    <property type="protein sequence ID" value="AAC07223.1"/>
    <property type="molecule type" value="Genomic_DNA"/>
</dbReference>
<dbReference type="PIR" id="F70403">
    <property type="entry name" value="F70403"/>
</dbReference>
<dbReference type="RefSeq" id="NP_213821.1">
    <property type="nucleotide sequence ID" value="NC_000918.1"/>
</dbReference>
<dbReference type="SMR" id="O67257"/>
<dbReference type="EnsemblBacteria" id="AAC07223">
    <property type="protein sequence ID" value="AAC07223"/>
    <property type="gene ID" value="aq_1201"/>
</dbReference>
<dbReference type="KEGG" id="aae:aq_1201"/>
<dbReference type="HOGENOM" id="CLU_171586_0_0_0"/>
<dbReference type="InParanoid" id="O67257"/>
<dbReference type="OrthoDB" id="15601at2"/>
<dbReference type="Proteomes" id="UP000000798">
    <property type="component" value="Chromosome"/>
</dbReference>
<sequence length="112" mass="13479">MSLTSSIRDKLYCMAEKKISEERRESTTQTAEELKVPSMEKELEELRREFFKFMEFCIPPKEVRDEVMKNLYNIPLSILKAFRTILDYEIKVLEERVKETERKPKSRRIAVE</sequence>
<protein>
    <recommendedName>
        <fullName>Uncharacterized protein aq_1201</fullName>
    </recommendedName>
</protein>
<gene>
    <name type="ordered locus">aq_1201</name>
</gene>
<proteinExistence type="predicted"/>
<accession>O67257</accession>
<name>Y1201_AQUAE</name>
<keyword id="KW-0175">Coiled coil</keyword>
<keyword id="KW-1185">Reference proteome</keyword>
<evidence type="ECO:0000255" key="1"/>
<feature type="chain" id="PRO_0000186910" description="Uncharacterized protein aq_1201">
    <location>
        <begin position="1"/>
        <end position="112"/>
    </location>
</feature>
<feature type="coiled-coil region" evidence="1">
    <location>
        <begin position="15"/>
        <end position="53"/>
    </location>
</feature>
<feature type="coiled-coil region" evidence="1">
    <location>
        <begin position="86"/>
        <end position="103"/>
    </location>
</feature>
<reference key="1">
    <citation type="journal article" date="1998" name="Nature">
        <title>The complete genome of the hyperthermophilic bacterium Aquifex aeolicus.</title>
        <authorList>
            <person name="Deckert G."/>
            <person name="Warren P.V."/>
            <person name="Gaasterland T."/>
            <person name="Young W.G."/>
            <person name="Lenox A.L."/>
            <person name="Graham D.E."/>
            <person name="Overbeek R."/>
            <person name="Snead M.A."/>
            <person name="Keller M."/>
            <person name="Aujay M."/>
            <person name="Huber R."/>
            <person name="Feldman R.A."/>
            <person name="Short J.M."/>
            <person name="Olsen G.J."/>
            <person name="Swanson R.V."/>
        </authorList>
    </citation>
    <scope>NUCLEOTIDE SEQUENCE [LARGE SCALE GENOMIC DNA]</scope>
    <source>
        <strain>VF5</strain>
    </source>
</reference>
<organism>
    <name type="scientific">Aquifex aeolicus (strain VF5)</name>
    <dbReference type="NCBI Taxonomy" id="224324"/>
    <lineage>
        <taxon>Bacteria</taxon>
        <taxon>Pseudomonadati</taxon>
        <taxon>Aquificota</taxon>
        <taxon>Aquificia</taxon>
        <taxon>Aquificales</taxon>
        <taxon>Aquificaceae</taxon>
        <taxon>Aquifex</taxon>
    </lineage>
</organism>